<organism>
    <name type="scientific">Staphylococcus aureus</name>
    <dbReference type="NCBI Taxonomy" id="1280"/>
    <lineage>
        <taxon>Bacteria</taxon>
        <taxon>Bacillati</taxon>
        <taxon>Bacillota</taxon>
        <taxon>Bacilli</taxon>
        <taxon>Bacillales</taxon>
        <taxon>Staphylococcaceae</taxon>
        <taxon>Staphylococcus</taxon>
    </lineage>
</organism>
<reference key="1">
    <citation type="submission" date="1999-03" db="EMBL/GenBank/DDBJ databases">
        <title>Isolation and characterisation of a glycolytic operon in Staphylococcus aureus.</title>
        <authorList>
            <person name="Morrissey J.A."/>
            <person name="Williams P."/>
        </authorList>
    </citation>
    <scope>NUCLEOTIDE SEQUENCE [GENOMIC DNA]</scope>
    <source>
        <strain>BB</strain>
    </source>
</reference>
<feature type="chain" id="PRO_0000090288" description="Triosephosphate isomerase">
    <location>
        <begin position="1"/>
        <end position="253"/>
    </location>
</feature>
<feature type="active site" description="Electrophile" evidence="1">
    <location>
        <position position="97"/>
    </location>
</feature>
<feature type="active site" description="Proton acceptor" evidence="1">
    <location>
        <position position="169"/>
    </location>
</feature>
<feature type="binding site" evidence="1">
    <location>
        <begin position="9"/>
        <end position="11"/>
    </location>
    <ligand>
        <name>substrate</name>
    </ligand>
</feature>
<feature type="binding site" evidence="1">
    <location>
        <position position="175"/>
    </location>
    <ligand>
        <name>substrate</name>
    </ligand>
</feature>
<feature type="binding site" evidence="1">
    <location>
        <position position="215"/>
    </location>
    <ligand>
        <name>substrate</name>
    </ligand>
</feature>
<feature type="binding site" evidence="1">
    <location>
        <begin position="236"/>
        <end position="237"/>
    </location>
    <ligand>
        <name>substrate</name>
    </ligand>
</feature>
<sequence length="253" mass="27262">MRTPIIAGNWKMNKTVQEAKDFVNALPTLPDSKEVESVICAPAIQLDALTTAVKEGKAQGLEIGAQNTYFEDNGAFTGETSPVALADLGVKYVVIGHSERRELFHETDEEINKKAHAIFKHGMTPIICVGETDEERESGKANDVVGEQVKKAVAGLSEDQLKSVVIAYEPIWAIGTGKSSTSEDANEMCAFVRQTIADLSSKEVSEATRIQYGGSVKPNNIKEYMAQTDIDGALVGGASLKVEDFVQLLEGAK</sequence>
<protein>
    <recommendedName>
        <fullName evidence="1">Triosephosphate isomerase</fullName>
        <shortName evidence="1">TIM</shortName>
        <shortName evidence="1">TPI</shortName>
        <ecNumber evidence="1">5.3.1.1</ecNumber>
    </recommendedName>
    <alternativeName>
        <fullName evidence="1">Triose-phosphate isomerase</fullName>
    </alternativeName>
</protein>
<name>TPIS_STAAU</name>
<gene>
    <name evidence="1" type="primary">tpiA</name>
    <name type="synonym">tpi</name>
</gene>
<keyword id="KW-0963">Cytoplasm</keyword>
<keyword id="KW-0312">Gluconeogenesis</keyword>
<keyword id="KW-0324">Glycolysis</keyword>
<keyword id="KW-0413">Isomerase</keyword>
<proteinExistence type="inferred from homology"/>
<comment type="function">
    <text evidence="1">Involved in the gluconeogenesis. Catalyzes stereospecifically the conversion of dihydroxyacetone phosphate (DHAP) to D-glyceraldehyde-3-phosphate (G3P).</text>
</comment>
<comment type="catalytic activity">
    <reaction evidence="1">
        <text>D-glyceraldehyde 3-phosphate = dihydroxyacetone phosphate</text>
        <dbReference type="Rhea" id="RHEA:18585"/>
        <dbReference type="ChEBI" id="CHEBI:57642"/>
        <dbReference type="ChEBI" id="CHEBI:59776"/>
        <dbReference type="EC" id="5.3.1.1"/>
    </reaction>
</comment>
<comment type="pathway">
    <text evidence="1">Carbohydrate biosynthesis; gluconeogenesis.</text>
</comment>
<comment type="pathway">
    <text evidence="1">Carbohydrate degradation; glycolysis; D-glyceraldehyde 3-phosphate from glycerone phosphate: step 1/1.</text>
</comment>
<comment type="subunit">
    <text evidence="1">Homodimer.</text>
</comment>
<comment type="subcellular location">
    <subcellularLocation>
        <location evidence="1">Cytoplasm</location>
    </subcellularLocation>
</comment>
<comment type="similarity">
    <text evidence="1">Belongs to the triosephosphate isomerase family.</text>
</comment>
<accession>P68823</accession>
<accession>Q9Z5C3</accession>
<dbReference type="EC" id="5.3.1.1" evidence="1"/>
<dbReference type="EMBL" id="AJ133520">
    <property type="protein sequence ID" value="CAB38647.1"/>
    <property type="molecule type" value="Genomic_DNA"/>
</dbReference>
<dbReference type="RefSeq" id="WP_001260089.1">
    <property type="nucleotide sequence ID" value="NZ_WYDB01000004.1"/>
</dbReference>
<dbReference type="SMR" id="P68823"/>
<dbReference type="OMA" id="NWKMHMT"/>
<dbReference type="UniPathway" id="UPA00109">
    <property type="reaction ID" value="UER00189"/>
</dbReference>
<dbReference type="UniPathway" id="UPA00138"/>
<dbReference type="GO" id="GO:0005829">
    <property type="term" value="C:cytosol"/>
    <property type="evidence" value="ECO:0007669"/>
    <property type="project" value="TreeGrafter"/>
</dbReference>
<dbReference type="GO" id="GO:0004807">
    <property type="term" value="F:triose-phosphate isomerase activity"/>
    <property type="evidence" value="ECO:0007669"/>
    <property type="project" value="UniProtKB-UniRule"/>
</dbReference>
<dbReference type="GO" id="GO:0006094">
    <property type="term" value="P:gluconeogenesis"/>
    <property type="evidence" value="ECO:0007669"/>
    <property type="project" value="UniProtKB-UniRule"/>
</dbReference>
<dbReference type="GO" id="GO:0046166">
    <property type="term" value="P:glyceraldehyde-3-phosphate biosynthetic process"/>
    <property type="evidence" value="ECO:0007669"/>
    <property type="project" value="TreeGrafter"/>
</dbReference>
<dbReference type="GO" id="GO:0019563">
    <property type="term" value="P:glycerol catabolic process"/>
    <property type="evidence" value="ECO:0007669"/>
    <property type="project" value="TreeGrafter"/>
</dbReference>
<dbReference type="GO" id="GO:0006096">
    <property type="term" value="P:glycolytic process"/>
    <property type="evidence" value="ECO:0007669"/>
    <property type="project" value="UniProtKB-UniRule"/>
</dbReference>
<dbReference type="CDD" id="cd00311">
    <property type="entry name" value="TIM"/>
    <property type="match status" value="1"/>
</dbReference>
<dbReference type="FunFam" id="3.20.20.70:FF:000016">
    <property type="entry name" value="Triosephosphate isomerase"/>
    <property type="match status" value="1"/>
</dbReference>
<dbReference type="Gene3D" id="3.20.20.70">
    <property type="entry name" value="Aldolase class I"/>
    <property type="match status" value="1"/>
</dbReference>
<dbReference type="HAMAP" id="MF_00147_B">
    <property type="entry name" value="TIM_B"/>
    <property type="match status" value="1"/>
</dbReference>
<dbReference type="InterPro" id="IPR013785">
    <property type="entry name" value="Aldolase_TIM"/>
</dbReference>
<dbReference type="InterPro" id="IPR035990">
    <property type="entry name" value="TIM_sf"/>
</dbReference>
<dbReference type="InterPro" id="IPR022896">
    <property type="entry name" value="TrioseP_Isoase_bac/euk"/>
</dbReference>
<dbReference type="InterPro" id="IPR000652">
    <property type="entry name" value="Triosephosphate_isomerase"/>
</dbReference>
<dbReference type="InterPro" id="IPR020861">
    <property type="entry name" value="Triosephosphate_isomerase_AS"/>
</dbReference>
<dbReference type="NCBIfam" id="TIGR00419">
    <property type="entry name" value="tim"/>
    <property type="match status" value="1"/>
</dbReference>
<dbReference type="PANTHER" id="PTHR21139">
    <property type="entry name" value="TRIOSEPHOSPHATE ISOMERASE"/>
    <property type="match status" value="1"/>
</dbReference>
<dbReference type="PANTHER" id="PTHR21139:SF42">
    <property type="entry name" value="TRIOSEPHOSPHATE ISOMERASE"/>
    <property type="match status" value="1"/>
</dbReference>
<dbReference type="Pfam" id="PF00121">
    <property type="entry name" value="TIM"/>
    <property type="match status" value="1"/>
</dbReference>
<dbReference type="SUPFAM" id="SSF51351">
    <property type="entry name" value="Triosephosphate isomerase (TIM)"/>
    <property type="match status" value="1"/>
</dbReference>
<dbReference type="PROSITE" id="PS00171">
    <property type="entry name" value="TIM_1"/>
    <property type="match status" value="1"/>
</dbReference>
<dbReference type="PROSITE" id="PS51440">
    <property type="entry name" value="TIM_2"/>
    <property type="match status" value="1"/>
</dbReference>
<evidence type="ECO:0000255" key="1">
    <source>
        <dbReference type="HAMAP-Rule" id="MF_00147"/>
    </source>
</evidence>